<protein>
    <recommendedName>
        <fullName evidence="1">ATP-dependent protease subunit HslV</fullName>
        <ecNumber evidence="1">3.4.25.2</ecNumber>
    </recommendedName>
</protein>
<comment type="function">
    <text evidence="1">Protease subunit of a proteasome-like degradation complex believed to be a general protein degrading machinery.</text>
</comment>
<comment type="catalytic activity">
    <reaction evidence="1">
        <text>ATP-dependent cleavage of peptide bonds with broad specificity.</text>
        <dbReference type="EC" id="3.4.25.2"/>
    </reaction>
</comment>
<comment type="activity regulation">
    <text evidence="1">Allosterically activated by HslU binding.</text>
</comment>
<comment type="subunit">
    <text evidence="1">A double ring-shaped homohexamer of HslV is capped on each side by a ring-shaped HslU homohexamer. The assembly of the HslU/HslV complex is dependent on binding of ATP.</text>
</comment>
<comment type="subcellular location">
    <subcellularLocation>
        <location evidence="1">Cytoplasm</location>
    </subcellularLocation>
</comment>
<comment type="similarity">
    <text evidence="1">Belongs to the peptidase T1B family. HslV subfamily.</text>
</comment>
<sequence length="182" mass="19738">MSDNLSLHGTTILCLKKNEEIIIAADGQVSHGNTVLKSTARKLRTIANNKIIAGFAGSTADGLALFEKLAVKIEQHKHNLLRSAVELAKDWRSDKYLRRLEAMMIVADRSHILILTGNGDVVEPENNVAAIGSGGLFALSAARALMSYENNLTAEEIALKSMNIAADLCVFSNHNIIMEKVV</sequence>
<accession>C3PN29</accession>
<gene>
    <name evidence="1" type="primary">hslV</name>
    <name type="ordered locus">RAF_ORF0402</name>
</gene>
<proteinExistence type="inferred from homology"/>
<keyword id="KW-0021">Allosteric enzyme</keyword>
<keyword id="KW-0963">Cytoplasm</keyword>
<keyword id="KW-0378">Hydrolase</keyword>
<keyword id="KW-0479">Metal-binding</keyword>
<keyword id="KW-0645">Protease</keyword>
<keyword id="KW-0915">Sodium</keyword>
<keyword id="KW-0346">Stress response</keyword>
<keyword id="KW-0888">Threonine protease</keyword>
<dbReference type="EC" id="3.4.25.2" evidence="1"/>
<dbReference type="EMBL" id="CP001612">
    <property type="protein sequence ID" value="ACP53339.1"/>
    <property type="molecule type" value="Genomic_DNA"/>
</dbReference>
<dbReference type="RefSeq" id="WP_004996101.1">
    <property type="nucleotide sequence ID" value="NC_012633.1"/>
</dbReference>
<dbReference type="SMR" id="C3PN29"/>
<dbReference type="GeneID" id="95362094"/>
<dbReference type="KEGG" id="raf:RAF_ORF0402"/>
<dbReference type="HOGENOM" id="CLU_093872_1_0_5"/>
<dbReference type="Proteomes" id="UP000002305">
    <property type="component" value="Chromosome"/>
</dbReference>
<dbReference type="GO" id="GO:0009376">
    <property type="term" value="C:HslUV protease complex"/>
    <property type="evidence" value="ECO:0007669"/>
    <property type="project" value="UniProtKB-UniRule"/>
</dbReference>
<dbReference type="GO" id="GO:0005839">
    <property type="term" value="C:proteasome core complex"/>
    <property type="evidence" value="ECO:0007669"/>
    <property type="project" value="InterPro"/>
</dbReference>
<dbReference type="GO" id="GO:0046872">
    <property type="term" value="F:metal ion binding"/>
    <property type="evidence" value="ECO:0007669"/>
    <property type="project" value="UniProtKB-KW"/>
</dbReference>
<dbReference type="GO" id="GO:0004298">
    <property type="term" value="F:threonine-type endopeptidase activity"/>
    <property type="evidence" value="ECO:0007669"/>
    <property type="project" value="UniProtKB-KW"/>
</dbReference>
<dbReference type="GO" id="GO:0051603">
    <property type="term" value="P:proteolysis involved in protein catabolic process"/>
    <property type="evidence" value="ECO:0007669"/>
    <property type="project" value="InterPro"/>
</dbReference>
<dbReference type="CDD" id="cd01913">
    <property type="entry name" value="protease_HslV"/>
    <property type="match status" value="1"/>
</dbReference>
<dbReference type="Gene3D" id="3.60.20.10">
    <property type="entry name" value="Glutamine Phosphoribosylpyrophosphate, subunit 1, domain 1"/>
    <property type="match status" value="1"/>
</dbReference>
<dbReference type="HAMAP" id="MF_00248">
    <property type="entry name" value="HslV"/>
    <property type="match status" value="1"/>
</dbReference>
<dbReference type="InterPro" id="IPR022281">
    <property type="entry name" value="ATP-dep_Prtase_HsIV_su"/>
</dbReference>
<dbReference type="InterPro" id="IPR029055">
    <property type="entry name" value="Ntn_hydrolases_N"/>
</dbReference>
<dbReference type="InterPro" id="IPR001353">
    <property type="entry name" value="Proteasome_sua/b"/>
</dbReference>
<dbReference type="InterPro" id="IPR023333">
    <property type="entry name" value="Proteasome_suB-type"/>
</dbReference>
<dbReference type="NCBIfam" id="TIGR03692">
    <property type="entry name" value="ATP_dep_HslV"/>
    <property type="match status" value="1"/>
</dbReference>
<dbReference type="NCBIfam" id="NF003964">
    <property type="entry name" value="PRK05456.1"/>
    <property type="match status" value="1"/>
</dbReference>
<dbReference type="PANTHER" id="PTHR32194:SF0">
    <property type="entry name" value="ATP-DEPENDENT PROTEASE SUBUNIT HSLV"/>
    <property type="match status" value="1"/>
</dbReference>
<dbReference type="PANTHER" id="PTHR32194">
    <property type="entry name" value="METALLOPROTEASE TLDD"/>
    <property type="match status" value="1"/>
</dbReference>
<dbReference type="Pfam" id="PF00227">
    <property type="entry name" value="Proteasome"/>
    <property type="match status" value="1"/>
</dbReference>
<dbReference type="PIRSF" id="PIRSF039093">
    <property type="entry name" value="HslV"/>
    <property type="match status" value="1"/>
</dbReference>
<dbReference type="SUPFAM" id="SSF56235">
    <property type="entry name" value="N-terminal nucleophile aminohydrolases (Ntn hydrolases)"/>
    <property type="match status" value="1"/>
</dbReference>
<dbReference type="PROSITE" id="PS51476">
    <property type="entry name" value="PROTEASOME_BETA_2"/>
    <property type="match status" value="1"/>
</dbReference>
<reference key="1">
    <citation type="journal article" date="2009" name="BMC Genomics">
        <title>Analysis of the Rickettsia africae genome reveals that virulence acquisition in Rickettsia species may be explained by genome reduction.</title>
        <authorList>
            <person name="Fournier P.-E."/>
            <person name="El Karkouri K."/>
            <person name="Leroy Q."/>
            <person name="Robert C."/>
            <person name="Giumelli B."/>
            <person name="Renesto P."/>
            <person name="Socolovschi C."/>
            <person name="Parola P."/>
            <person name="Audic S."/>
            <person name="Raoult D."/>
        </authorList>
    </citation>
    <scope>NUCLEOTIDE SEQUENCE [LARGE SCALE GENOMIC DNA]</scope>
    <source>
        <strain>ESF-5</strain>
    </source>
</reference>
<evidence type="ECO:0000255" key="1">
    <source>
        <dbReference type="HAMAP-Rule" id="MF_00248"/>
    </source>
</evidence>
<feature type="chain" id="PRO_1000204513" description="ATP-dependent protease subunit HslV">
    <location>
        <begin position="1"/>
        <end position="182"/>
    </location>
</feature>
<feature type="active site" evidence="1">
    <location>
        <position position="10"/>
    </location>
</feature>
<feature type="binding site" evidence="1">
    <location>
        <position position="166"/>
    </location>
    <ligand>
        <name>Na(+)</name>
        <dbReference type="ChEBI" id="CHEBI:29101"/>
    </ligand>
</feature>
<feature type="binding site" evidence="1">
    <location>
        <position position="169"/>
    </location>
    <ligand>
        <name>Na(+)</name>
        <dbReference type="ChEBI" id="CHEBI:29101"/>
    </ligand>
</feature>
<feature type="binding site" evidence="1">
    <location>
        <position position="172"/>
    </location>
    <ligand>
        <name>Na(+)</name>
        <dbReference type="ChEBI" id="CHEBI:29101"/>
    </ligand>
</feature>
<organism>
    <name type="scientific">Rickettsia africae (strain ESF-5)</name>
    <dbReference type="NCBI Taxonomy" id="347255"/>
    <lineage>
        <taxon>Bacteria</taxon>
        <taxon>Pseudomonadati</taxon>
        <taxon>Pseudomonadota</taxon>
        <taxon>Alphaproteobacteria</taxon>
        <taxon>Rickettsiales</taxon>
        <taxon>Rickettsiaceae</taxon>
        <taxon>Rickettsieae</taxon>
        <taxon>Rickettsia</taxon>
        <taxon>spotted fever group</taxon>
    </lineage>
</organism>
<name>HSLV_RICAE</name>